<proteinExistence type="inferred from homology"/>
<comment type="function">
    <text evidence="4">Probable toxin that belongs to the MSDIN-like toxin family responsible for a large number of food poisoning cases and deaths (PubMed:24613547).</text>
</comment>
<comment type="PTM">
    <text evidence="1">Processed by the macrocyclase-peptidase enzyme POPB to yield a toxic cyclic heptapeptide (By similarity). POPB first removes 10 residues from the N-terminus (By similarity). Conformational trapping of the remaining peptide forces the enzyme to release this intermediate rather than proceed to macrocyclization (By similarity). The enzyme rebinds the remaining peptide in a different conformation and catalyzes macrocyclization of the N-terminal 7 residues (By similarity).</text>
</comment>
<comment type="similarity">
    <text evidence="3">Belongs to the MSDIN fungal toxin family.</text>
</comment>
<sequence>MSDINATRLPVWIGYSPCVGDDAVALLNRGEG</sequence>
<feature type="propeptide" id="PRO_0000443698" evidence="4">
    <location>
        <begin position="1"/>
        <end position="10"/>
    </location>
</feature>
<feature type="peptide" id="PRO_0000443699" description="Toxin MSD3" evidence="4">
    <location>
        <begin position="11"/>
        <end position="17"/>
    </location>
</feature>
<feature type="propeptide" id="PRO_0000443700" evidence="4">
    <location>
        <begin position="18"/>
        <end position="32"/>
    </location>
</feature>
<feature type="cross-link" description="Cyclopeptide (Val-Pro)" evidence="4">
    <location>
        <begin position="11"/>
        <end position="17"/>
    </location>
</feature>
<keyword id="KW-0800">Toxin</keyword>
<name>MSD3_AMAFL</name>
<dbReference type="EMBL" id="KF552079">
    <property type="protein sequence ID" value="AHB18707.1"/>
    <property type="molecule type" value="Genomic_DNA"/>
</dbReference>
<dbReference type="GO" id="GO:0090729">
    <property type="term" value="F:toxin activity"/>
    <property type="evidence" value="ECO:0007669"/>
    <property type="project" value="UniProtKB-KW"/>
</dbReference>
<dbReference type="InterPro" id="IPR027582">
    <property type="entry name" value="Amanitin/phalloidin"/>
</dbReference>
<dbReference type="NCBIfam" id="TIGR04309">
    <property type="entry name" value="amanitin"/>
    <property type="match status" value="1"/>
</dbReference>
<reference key="1">
    <citation type="journal article" date="2014" name="Toxicon">
        <title>The molecular diversity of toxin gene families in lethal Amanita mushrooms.</title>
        <authorList>
            <person name="Li P."/>
            <person name="Deng W."/>
            <person name="Li T."/>
        </authorList>
    </citation>
    <scope>NUCLEOTIDE SEQUENCE [GENOMIC DNA]</scope>
    <scope>FUNCTION</scope>
</reference>
<protein>
    <recommendedName>
        <fullName evidence="2">MSDIN-like toxin proprotein 3</fullName>
    </recommendedName>
    <component>
        <recommendedName>
            <fullName evidence="4">Toxin MSD3</fullName>
        </recommendedName>
    </component>
</protein>
<evidence type="ECO:0000250" key="1">
    <source>
        <dbReference type="UniProtKB" id="A0A067SLB9"/>
    </source>
</evidence>
<evidence type="ECO:0000303" key="2">
    <source>
    </source>
</evidence>
<evidence type="ECO:0000305" key="3"/>
<evidence type="ECO:0000305" key="4">
    <source>
    </source>
</evidence>
<accession>A0A023IWG1</accession>
<organism>
    <name type="scientific">Amanita fuligineoides</name>
    <dbReference type="NCBI Taxonomy" id="580329"/>
    <lineage>
        <taxon>Eukaryota</taxon>
        <taxon>Fungi</taxon>
        <taxon>Dikarya</taxon>
        <taxon>Basidiomycota</taxon>
        <taxon>Agaricomycotina</taxon>
        <taxon>Agaricomycetes</taxon>
        <taxon>Agaricomycetidae</taxon>
        <taxon>Agaricales</taxon>
        <taxon>Pluteineae</taxon>
        <taxon>Amanitaceae</taxon>
        <taxon>Amanita</taxon>
    </lineage>
</organism>